<comment type="function">
    <text evidence="3 4">N-methyltransferase; part of the gene cluster that mediates the biosynthesis of viridicatumtoxin, a tetracycline-like fungal meroterpenoid with a unique, fused spirobicyclic ring system (PubMed:20534346). The first step of the pathway is the production of the malonamoyl-CoA starter unit for the polyketide synthase vrtA (PubMed:20534346). The aldolase vrtJ may be involved in the synthesis of the malonamate substrate for malonamoyl-CoA synthetase vrtB (PubMed:20534346). The polyketide synthase vrtA then may utilize the malonamoyl-CoA starter unit, followed by sequential condensation of eight malonyl-CoA units to form the polyketide backbone (PubMed:20534346). The cyclization of the last ring could be mediated by the lactamase-like protein vrtG (PubMed:20534346). The proposed post-PKS tailoring steps are a hydroxylation at C5 catalyzed the cytochrome P450 monooxygenase vrtE, a hydroxylation at C12a catalyzed by VrtH and/or VrtI, and an O-methylation by the O-methyltransferase vrtF (PubMed:20534346, PubMed:24161266). VrtC is then proposed to catalyze the transfer of a geranyl group synthesized by vrtD to the aromatic C ring of the tetracyclic polyketide intermediate of viridicatumtoxin to yield previridicatumtoxin (PubMed:20534346). Finally, the cytochrome P450 monooxygenase vrtK catalyzes the spirocyclization of the geranyl moiety of previridicatumtoxin to afford viridicatumtoxin (PubMed:24161266).</text>
</comment>
<comment type="pathway">
    <text evidence="3">Secondary metabolite biosynthesis; terpenoid biosynthesis.</text>
</comment>
<comment type="biotechnology">
    <text evidence="2 5">Viridicatumtoxin and its derivative, viridicatumtoxin B, exhibit anti-methicillin-resistant Staphylococcus aureus (anti-MRSA) activity (PubMed:19168978). Moreover, viridicatumtoxin and a C2 acetyl analog, spirohexaline, have been demonstrated to inhibit bacterial undecaprenyl diphosphate synthase, a potential new target for antibiotic development (PubMed:27049441).</text>
</comment>
<comment type="similarity">
    <text evidence="1">Belongs to the methyltransferase superfamily.</text>
</comment>
<evidence type="ECO:0000255" key="1"/>
<evidence type="ECO:0000269" key="2">
    <source>
    </source>
</evidence>
<evidence type="ECO:0000269" key="3">
    <source>
    </source>
</evidence>
<evidence type="ECO:0000269" key="4">
    <source>
    </source>
</evidence>
<evidence type="ECO:0000269" key="5">
    <source>
    </source>
</evidence>
<evidence type="ECO:0000303" key="6">
    <source>
    </source>
</evidence>
<evidence type="ECO:0000305" key="7">
    <source>
    </source>
</evidence>
<protein>
    <recommendedName>
        <fullName evidence="6">N-methyltransferase vrtF</fullName>
        <ecNumber evidence="7">2.1.1.-</ecNumber>
    </recommendedName>
    <alternativeName>
        <fullName evidence="6">Viridicatumtoxin synthesis protein F</fullName>
    </alternativeName>
</protein>
<sequence>MTTTTTTDDTQKLDPSASDEVIYKSWDLLIYEIWVLGIVSTWAWGCSTTEYLLPQFRANVGTNHLDVGSGTGYYLRKGGIPASTRLTLLDLERPALDLGLQRCGRSDARGLQADILQPLPVIDKFDSVSMYYLLHCIPASVEDKCAIFKHIKHNMTPDGVIHGANVLGKGVRNDGHFAAYVRRGVLKAGIFHNLDDNAYDFEHALRMNFEEVETRVVGSVFIFRASRPKLDEGDLLET</sequence>
<accession>D7PHZ7</accession>
<gene>
    <name evidence="6" type="primary">vrtF</name>
</gene>
<reference key="1">
    <citation type="journal article" date="2010" name="Chem. Biol.">
        <title>Identification of the viridicatumtoxin and griseofulvin gene clusters from Penicillium aethiopicum.</title>
        <authorList>
            <person name="Chooi Y.H."/>
            <person name="Cacho R."/>
            <person name="Tang Y."/>
        </authorList>
    </citation>
    <scope>NUCLEOTIDE SEQUENCE [GENOMIC DNA]</scope>
    <scope>FUNCTION</scope>
    <source>
        <strain>IBT 5753</strain>
    </source>
</reference>
<reference key="2">
    <citation type="journal article" date="2008" name="J. Antibiot.">
        <title>Viridicatumtoxin B, a new anti-MRSA agent from Penicillium sp. FR11.</title>
        <authorList>
            <person name="Zheng C.J."/>
            <person name="Yu H.E."/>
            <person name="Kim E.H."/>
            <person name="Kim W.G."/>
        </authorList>
    </citation>
    <scope>BIOTECHNOLOGY</scope>
</reference>
<reference key="3">
    <citation type="journal article" date="2013" name="J. Am. Chem. Soc.">
        <title>A cytochrome P450 serves as an unexpected terpene cyclase during fungal meroterpenoid biosynthesis.</title>
        <authorList>
            <person name="Chooi Y.H."/>
            <person name="Hong Y.J."/>
            <person name="Cacho R.A."/>
            <person name="Tantillo D.J."/>
            <person name="Tang Y."/>
        </authorList>
    </citation>
    <scope>FUNCTION</scope>
</reference>
<reference key="4">
    <citation type="journal article" date="2016" name="J. Antibiot.">
        <title>Inhibition of bacterial undecaprenyl pyrophosphate synthase by small fungal molecules.</title>
        <authorList>
            <person name="Inokoshi J."/>
            <person name="Nakamura Y."/>
            <person name="Komada S."/>
            <person name="Komatsu K."/>
            <person name="Umeyama H."/>
            <person name="Tomoda H."/>
        </authorList>
    </citation>
    <scope>BIOTECHNOLOGY</scope>
</reference>
<organism>
    <name type="scientific">Penicillium aethiopicum</name>
    <dbReference type="NCBI Taxonomy" id="36650"/>
    <lineage>
        <taxon>Eukaryota</taxon>
        <taxon>Fungi</taxon>
        <taxon>Dikarya</taxon>
        <taxon>Ascomycota</taxon>
        <taxon>Pezizomycotina</taxon>
        <taxon>Eurotiomycetes</taxon>
        <taxon>Eurotiomycetidae</taxon>
        <taxon>Eurotiales</taxon>
        <taxon>Aspergillaceae</taxon>
        <taxon>Penicillium</taxon>
    </lineage>
</organism>
<proteinExistence type="evidence at protein level"/>
<name>VRTF_PENAE</name>
<dbReference type="EC" id="2.1.1.-" evidence="7"/>
<dbReference type="EMBL" id="GU574477">
    <property type="protein sequence ID" value="ADI24931.1"/>
    <property type="molecule type" value="Genomic_DNA"/>
</dbReference>
<dbReference type="SMR" id="D7PHZ7"/>
<dbReference type="BioCyc" id="MetaCyc:MONOMER-19277"/>
<dbReference type="UniPathway" id="UPA00213"/>
<dbReference type="GO" id="GO:0008757">
    <property type="term" value="F:S-adenosylmethionine-dependent methyltransferase activity"/>
    <property type="evidence" value="ECO:0007669"/>
    <property type="project" value="InterPro"/>
</dbReference>
<dbReference type="GO" id="GO:0032259">
    <property type="term" value="P:methylation"/>
    <property type="evidence" value="ECO:0007669"/>
    <property type="project" value="UniProtKB-KW"/>
</dbReference>
<dbReference type="GO" id="GO:0016114">
    <property type="term" value="P:terpenoid biosynthetic process"/>
    <property type="evidence" value="ECO:0007669"/>
    <property type="project" value="UniProtKB-UniPathway"/>
</dbReference>
<dbReference type="GO" id="GO:0140872">
    <property type="term" value="P:viridicatumtoxin biosynthetic process"/>
    <property type="evidence" value="ECO:0000304"/>
    <property type="project" value="GO_Central"/>
</dbReference>
<dbReference type="CDD" id="cd02440">
    <property type="entry name" value="AdoMet_MTases"/>
    <property type="match status" value="1"/>
</dbReference>
<dbReference type="Gene3D" id="3.40.50.150">
    <property type="entry name" value="Vaccinia Virus protein VP39"/>
    <property type="match status" value="1"/>
</dbReference>
<dbReference type="InterPro" id="IPR013216">
    <property type="entry name" value="Methyltransf_11"/>
</dbReference>
<dbReference type="InterPro" id="IPR016584">
    <property type="entry name" value="MeTrfase_VrtF"/>
</dbReference>
<dbReference type="InterPro" id="IPR029063">
    <property type="entry name" value="SAM-dependent_MTases_sf"/>
</dbReference>
<dbReference type="Pfam" id="PF08241">
    <property type="entry name" value="Methyltransf_11"/>
    <property type="match status" value="1"/>
</dbReference>
<dbReference type="PIRSF" id="PIRSF011491">
    <property type="entry name" value="Mtase_YbcY_prd"/>
    <property type="match status" value="1"/>
</dbReference>
<dbReference type="SUPFAM" id="SSF53335">
    <property type="entry name" value="S-adenosyl-L-methionine-dependent methyltransferases"/>
    <property type="match status" value="1"/>
</dbReference>
<feature type="chain" id="PRO_0000436824" description="N-methyltransferase vrtF">
    <location>
        <begin position="1"/>
        <end position="238"/>
    </location>
</feature>
<keyword id="KW-0489">Methyltransferase</keyword>
<keyword id="KW-0808">Transferase</keyword>